<feature type="chain" id="PRO_0000314710" description="Bifunctional ribose 1,5-bisphosphokinase-thymidine phosphorylase">
    <location>
        <begin position="1"/>
        <end position="602"/>
    </location>
</feature>
<feature type="region of interest" description="Ribose 1,5-bisphosphokinase">
    <location>
        <begin position="1"/>
        <end position="187"/>
    </location>
</feature>
<feature type="region of interest" description="Thymidinephosphorylase">
    <location>
        <begin position="188"/>
        <end position="602"/>
    </location>
</feature>
<sequence length="602" mass="63580">MKESGTFFLVVGPSGAGKDSLIDGARATLGNDEYVFARRIITRPSGSPGEDHESVAEAEFAERERNGEFLVTWHAHGLRYGLPQWLVGLLETGKHVVANGSRGVIAMLARQLPRFVVVNVTAPQDVLAQRIAARGRESGDDVMRRVARQAPPMPDGVHCVTVTNDSTLDLGVARFTDALRNGANAGSVPQPASRRHLAAKLDGQPLDEGAYEAILRDAIAGRYTAQELTAFLTAATRSLDDREVVALARARTRFTARIEWDEPIVVDKHSMGGIPGSRITLIVVPIVAAYGLAMPKTSSRAITSAAGTADAMETVARVDLTHDDVRRCVAQARACIAWNGRLNHSVIDDVMNAITRPLGLDSRRWAVASILSKKATAGATHVIVDIPYGPQTKLSARADADALAGLFEEVGKGLGLHVRALVTDGSRPIGRGVGPALEVRDVRQVLENHPDAPMDLREKALRFAGEIIAFDPRVASAAQGMRIATALLDEGSARAAFDRIVATQGIRPDPVAPGAHTHVIVAPAEGRVAAINGWQISGIARAAGAPRSAGAGIDLLCTIGERVAAGEPLYRIHAESAADLATAVAMTGPAGEASTAVRVDPD</sequence>
<accession>Q46UT0</accession>
<keyword id="KW-0019">Alkylphosphonate uptake</keyword>
<keyword id="KW-0067">ATP-binding</keyword>
<keyword id="KW-0328">Glycosyltransferase</keyword>
<keyword id="KW-0511">Multifunctional enzyme</keyword>
<keyword id="KW-0547">Nucleotide-binding</keyword>
<keyword id="KW-0808">Transferase</keyword>
<evidence type="ECO:0000250" key="1"/>
<evidence type="ECO:0000305" key="2"/>
<dbReference type="EC" id="2.7.4.23"/>
<dbReference type="EC" id="2.4.2.4"/>
<dbReference type="EMBL" id="CP000091">
    <property type="protein sequence ID" value="AAZ63104.1"/>
    <property type="status" value="ALT_INIT"/>
    <property type="molecule type" value="Genomic_DNA"/>
</dbReference>
<dbReference type="SMR" id="Q46UT0"/>
<dbReference type="STRING" id="264198.Reut_B3746"/>
<dbReference type="KEGG" id="reu:Reut_B3746"/>
<dbReference type="eggNOG" id="COG0213">
    <property type="taxonomic scope" value="Bacteria"/>
</dbReference>
<dbReference type="HOGENOM" id="CLU_025040_6_0_4"/>
<dbReference type="OrthoDB" id="341217at2"/>
<dbReference type="UniPathway" id="UPA00087">
    <property type="reaction ID" value="UER00175"/>
</dbReference>
<dbReference type="GO" id="GO:0005829">
    <property type="term" value="C:cytosol"/>
    <property type="evidence" value="ECO:0007669"/>
    <property type="project" value="TreeGrafter"/>
</dbReference>
<dbReference type="GO" id="GO:0004645">
    <property type="term" value="F:1,4-alpha-oligoglucan phosphorylase activity"/>
    <property type="evidence" value="ECO:0007669"/>
    <property type="project" value="InterPro"/>
</dbReference>
<dbReference type="GO" id="GO:0005524">
    <property type="term" value="F:ATP binding"/>
    <property type="evidence" value="ECO:0007669"/>
    <property type="project" value="UniProtKB-KW"/>
</dbReference>
<dbReference type="GO" id="GO:0033863">
    <property type="term" value="F:ribose 1,5-bisphosphate phosphokinase activity"/>
    <property type="evidence" value="ECO:0007669"/>
    <property type="project" value="UniProtKB-UniRule"/>
</dbReference>
<dbReference type="GO" id="GO:0009032">
    <property type="term" value="F:thymidine phosphorylase activity"/>
    <property type="evidence" value="ECO:0007669"/>
    <property type="project" value="UniProtKB-UniRule"/>
</dbReference>
<dbReference type="GO" id="GO:0006015">
    <property type="term" value="P:5-phosphoribose 1-diphosphate biosynthetic process"/>
    <property type="evidence" value="ECO:0007669"/>
    <property type="project" value="UniProtKB-UniRule"/>
</dbReference>
<dbReference type="GO" id="GO:0019634">
    <property type="term" value="P:organic phosphonate metabolic process"/>
    <property type="evidence" value="ECO:0007669"/>
    <property type="project" value="UniProtKB-UniRule"/>
</dbReference>
<dbReference type="GO" id="GO:0015716">
    <property type="term" value="P:organic phosphonate transport"/>
    <property type="evidence" value="ECO:0007669"/>
    <property type="project" value="UniProtKB-KW"/>
</dbReference>
<dbReference type="GO" id="GO:0006206">
    <property type="term" value="P:pyrimidine nucleobase metabolic process"/>
    <property type="evidence" value="ECO:0007669"/>
    <property type="project" value="InterPro"/>
</dbReference>
<dbReference type="GO" id="GO:0006213">
    <property type="term" value="P:pyrimidine nucleoside metabolic process"/>
    <property type="evidence" value="ECO:0007669"/>
    <property type="project" value="InterPro"/>
</dbReference>
<dbReference type="Gene3D" id="1.20.970.50">
    <property type="match status" value="1"/>
</dbReference>
<dbReference type="Gene3D" id="3.40.1030.10">
    <property type="entry name" value="Nucleoside phosphorylase/phosphoribosyltransferase catalytic domain"/>
    <property type="match status" value="1"/>
</dbReference>
<dbReference type="Gene3D" id="3.40.50.300">
    <property type="entry name" value="P-loop containing nucleotide triphosphate hydrolases"/>
    <property type="match status" value="1"/>
</dbReference>
<dbReference type="Gene3D" id="3.90.1170.30">
    <property type="entry name" value="Pyrimidine nucleoside phosphorylase-like, C-terminal domain"/>
    <property type="match status" value="1"/>
</dbReference>
<dbReference type="HAMAP" id="MF_00836">
    <property type="entry name" value="PhnN"/>
    <property type="match status" value="1"/>
</dbReference>
<dbReference type="HAMAP" id="MF_00703">
    <property type="entry name" value="Thymid_phosp_2"/>
    <property type="match status" value="1"/>
</dbReference>
<dbReference type="InterPro" id="IPR000312">
    <property type="entry name" value="Glycosyl_Trfase_fam3"/>
</dbReference>
<dbReference type="InterPro" id="IPR036320">
    <property type="entry name" value="Glycosyl_Trfase_fam3_N_dom_sf"/>
</dbReference>
<dbReference type="InterPro" id="IPR035902">
    <property type="entry name" value="Nuc_phospho_transferase"/>
</dbReference>
<dbReference type="InterPro" id="IPR027417">
    <property type="entry name" value="P-loop_NTPase"/>
</dbReference>
<dbReference type="InterPro" id="IPR012699">
    <property type="entry name" value="PhnN"/>
</dbReference>
<dbReference type="InterPro" id="IPR036566">
    <property type="entry name" value="PYNP-like_C_sf"/>
</dbReference>
<dbReference type="InterPro" id="IPR013102">
    <property type="entry name" value="PYNP_C"/>
</dbReference>
<dbReference type="InterPro" id="IPR017872">
    <property type="entry name" value="Pyrmidine_PPase_CS"/>
</dbReference>
<dbReference type="InterPro" id="IPR028579">
    <property type="entry name" value="Thym_Pase_Put"/>
</dbReference>
<dbReference type="InterPro" id="IPR000053">
    <property type="entry name" value="Thymidine/pyrmidine_PPase"/>
</dbReference>
<dbReference type="NCBIfam" id="TIGR02322">
    <property type="entry name" value="phosphon_PhnN"/>
    <property type="match status" value="1"/>
</dbReference>
<dbReference type="NCBIfam" id="NF003338">
    <property type="entry name" value="PRK04350.1"/>
    <property type="match status" value="1"/>
</dbReference>
<dbReference type="PANTHER" id="PTHR10515">
    <property type="entry name" value="THYMIDINE PHOSPHORYLASE"/>
    <property type="match status" value="1"/>
</dbReference>
<dbReference type="PANTHER" id="PTHR10515:SF0">
    <property type="entry name" value="THYMIDINE PHOSPHORYLASE"/>
    <property type="match status" value="1"/>
</dbReference>
<dbReference type="Pfam" id="PF00591">
    <property type="entry name" value="Glycos_transf_3"/>
    <property type="match status" value="1"/>
</dbReference>
<dbReference type="Pfam" id="PF07831">
    <property type="entry name" value="PYNP_C"/>
    <property type="match status" value="1"/>
</dbReference>
<dbReference type="SMART" id="SM00941">
    <property type="entry name" value="PYNP_C"/>
    <property type="match status" value="1"/>
</dbReference>
<dbReference type="SUPFAM" id="SSF52418">
    <property type="entry name" value="Nucleoside phosphorylase/phosphoribosyltransferase catalytic domain"/>
    <property type="match status" value="1"/>
</dbReference>
<dbReference type="SUPFAM" id="SSF47648">
    <property type="entry name" value="Nucleoside phosphorylase/phosphoribosyltransferase N-terminal domain"/>
    <property type="match status" value="1"/>
</dbReference>
<dbReference type="SUPFAM" id="SSF52540">
    <property type="entry name" value="P-loop containing nucleoside triphosphate hydrolases"/>
    <property type="match status" value="1"/>
</dbReference>
<dbReference type="SUPFAM" id="SSF54680">
    <property type="entry name" value="Pyrimidine nucleoside phosphorylase C-terminal domain"/>
    <property type="match status" value="1"/>
</dbReference>
<dbReference type="PROSITE" id="PS00647">
    <property type="entry name" value="THYMID_PHOSPHORYLASE"/>
    <property type="match status" value="1"/>
</dbReference>
<name>RBKTP_CUPPJ</name>
<organism>
    <name type="scientific">Cupriavidus pinatubonensis (strain JMP 134 / LMG 1197)</name>
    <name type="common">Cupriavidus necator (strain JMP 134)</name>
    <dbReference type="NCBI Taxonomy" id="264198"/>
    <lineage>
        <taxon>Bacteria</taxon>
        <taxon>Pseudomonadati</taxon>
        <taxon>Pseudomonadota</taxon>
        <taxon>Betaproteobacteria</taxon>
        <taxon>Burkholderiales</taxon>
        <taxon>Burkholderiaceae</taxon>
        <taxon>Cupriavidus</taxon>
    </lineage>
</organism>
<protein>
    <recommendedName>
        <fullName>Bifunctional ribose 1,5-bisphosphokinase-thymidine phosphorylase</fullName>
    </recommendedName>
    <domain>
        <recommendedName>
            <fullName>Ribose 1,5-bisphosphate phosphokinase PhnN</fullName>
            <ecNumber>2.7.4.23</ecNumber>
        </recommendedName>
        <alternativeName>
            <fullName>Ribose 1,5-bisphosphokinase</fullName>
        </alternativeName>
    </domain>
    <domain>
        <recommendedName>
            <fullName>Putative thymidine phosphorylase</fullName>
            <ecNumber>2.4.2.4</ecNumber>
        </recommendedName>
        <alternativeName>
            <fullName>TdRPase</fullName>
        </alternativeName>
    </domain>
</protein>
<comment type="function">
    <text evidence="1">Catalyzes the phosphorylation of ribose 1,5-bisphosphate to 5-phospho-D-ribosyl alpha-1-diphosphate (PRPP).</text>
</comment>
<comment type="catalytic activity">
    <reaction>
        <text>alpha-D-ribose 1,5-bisphosphate + ATP = 5-phospho-alpha-D-ribose 1-diphosphate + ADP</text>
        <dbReference type="Rhea" id="RHEA:20109"/>
        <dbReference type="ChEBI" id="CHEBI:30616"/>
        <dbReference type="ChEBI" id="CHEBI:58017"/>
        <dbReference type="ChEBI" id="CHEBI:68688"/>
        <dbReference type="ChEBI" id="CHEBI:456216"/>
        <dbReference type="EC" id="2.7.4.23"/>
    </reaction>
</comment>
<comment type="catalytic activity">
    <reaction>
        <text>thymidine + phosphate = 2-deoxy-alpha-D-ribose 1-phosphate + thymine</text>
        <dbReference type="Rhea" id="RHEA:16037"/>
        <dbReference type="ChEBI" id="CHEBI:17748"/>
        <dbReference type="ChEBI" id="CHEBI:17821"/>
        <dbReference type="ChEBI" id="CHEBI:43474"/>
        <dbReference type="ChEBI" id="CHEBI:57259"/>
        <dbReference type="EC" id="2.4.2.4"/>
    </reaction>
</comment>
<comment type="pathway">
    <text>Metabolic intermediate biosynthesis; 5-phospho-alpha-D-ribose 1-diphosphate biosynthesis; 5-phospho-alpha-D-ribose 1-diphosphate from D-ribose 5-phosphate (route II): step 3/3.</text>
</comment>
<comment type="similarity">
    <text evidence="2">In the N-terminal section; belongs to the ribose 1,5-bisphosphokinase family.</text>
</comment>
<comment type="similarity">
    <text evidence="2">In the C-terminal section; belongs to the thymidine/pyrimidine-nucleoside phosphorylase family. Type 2 subfamily.</text>
</comment>
<comment type="sequence caution" evidence="2">
    <conflict type="erroneous initiation">
        <sequence resource="EMBL-CDS" id="AAZ63104"/>
    </conflict>
    <text>Truncated N-terminus.</text>
</comment>
<proteinExistence type="inferred from homology"/>
<gene>
    <name type="primary">phnN</name>
    <name type="ordered locus">Reut_B3746</name>
</gene>
<reference key="1">
    <citation type="journal article" date="2010" name="PLoS ONE">
        <title>The complete multipartite genome sequence of Cupriavidus necator JMP134, a versatile pollutant degrader.</title>
        <authorList>
            <person name="Lykidis A."/>
            <person name="Perez-Pantoja D."/>
            <person name="Ledger T."/>
            <person name="Mavromatis K."/>
            <person name="Anderson I.J."/>
            <person name="Ivanova N.N."/>
            <person name="Hooper S.D."/>
            <person name="Lapidus A."/>
            <person name="Lucas S."/>
            <person name="Gonzalez B."/>
            <person name="Kyrpides N.C."/>
        </authorList>
    </citation>
    <scope>NUCLEOTIDE SEQUENCE [LARGE SCALE GENOMIC DNA]</scope>
    <source>
        <strain>JMP134 / LMG 1197</strain>
    </source>
</reference>